<organism>
    <name type="scientific">Cryptococcus neoformans var. neoformans serotype D (strain JEC21 / ATCC MYA-565)</name>
    <name type="common">Filobasidiella neoformans</name>
    <dbReference type="NCBI Taxonomy" id="214684"/>
    <lineage>
        <taxon>Eukaryota</taxon>
        <taxon>Fungi</taxon>
        <taxon>Dikarya</taxon>
        <taxon>Basidiomycota</taxon>
        <taxon>Agaricomycotina</taxon>
        <taxon>Tremellomycetes</taxon>
        <taxon>Tremellales</taxon>
        <taxon>Cryptococcaceae</taxon>
        <taxon>Cryptococcus</taxon>
        <taxon>Cryptococcus neoformans species complex</taxon>
    </lineage>
</organism>
<accession>Q5KPF3</accession>
<keyword id="KW-0963">Cytoplasm</keyword>
<keyword id="KW-0378">Hydrolase</keyword>
<keyword id="KW-0460">Magnesium</keyword>
<keyword id="KW-0464">Manganese</keyword>
<keyword id="KW-0479">Metal-binding</keyword>
<keyword id="KW-0546">Nucleotide metabolism</keyword>
<keyword id="KW-0547">Nucleotide-binding</keyword>
<keyword id="KW-0539">Nucleus</keyword>
<keyword id="KW-1185">Reference proteome</keyword>
<feature type="chain" id="PRO_0000413136" description="Inosine triphosphate pyrophosphatase">
    <location>
        <begin position="1"/>
        <end position="189"/>
    </location>
</feature>
<feature type="binding site" evidence="1">
    <location>
        <begin position="8"/>
        <end position="13"/>
    </location>
    <ligand>
        <name>ITP</name>
        <dbReference type="ChEBI" id="CHEBI:61402"/>
    </ligand>
</feature>
<feature type="binding site" evidence="1">
    <location>
        <position position="39"/>
    </location>
    <ligand>
        <name>Mg(2+)</name>
        <dbReference type="ChEBI" id="CHEBI:18420"/>
    </ligand>
</feature>
<feature type="binding site" evidence="1">
    <location>
        <position position="51"/>
    </location>
    <ligand>
        <name>ITP</name>
        <dbReference type="ChEBI" id="CHEBI:61402"/>
    </ligand>
</feature>
<feature type="binding site" evidence="1">
    <location>
        <begin position="67"/>
        <end position="68"/>
    </location>
    <ligand>
        <name>ITP</name>
        <dbReference type="ChEBI" id="CHEBI:61402"/>
    </ligand>
</feature>
<feature type="binding site" evidence="1">
    <location>
        <position position="84"/>
    </location>
    <ligand>
        <name>ITP</name>
        <dbReference type="ChEBI" id="CHEBI:61402"/>
    </ligand>
</feature>
<feature type="binding site" evidence="1">
    <location>
        <begin position="143"/>
        <end position="146"/>
    </location>
    <ligand>
        <name>ITP</name>
        <dbReference type="ChEBI" id="CHEBI:61402"/>
    </ligand>
</feature>
<feature type="binding site" evidence="1">
    <location>
        <position position="167"/>
    </location>
    <ligand>
        <name>ITP</name>
        <dbReference type="ChEBI" id="CHEBI:61402"/>
    </ligand>
</feature>
<feature type="binding site" evidence="1">
    <location>
        <begin position="172"/>
        <end position="173"/>
    </location>
    <ligand>
        <name>ITP</name>
        <dbReference type="ChEBI" id="CHEBI:61402"/>
    </ligand>
</feature>
<name>ITPA_CRYNJ</name>
<evidence type="ECO:0000255" key="1">
    <source>
        <dbReference type="HAMAP-Rule" id="MF_03148"/>
    </source>
</evidence>
<protein>
    <recommendedName>
        <fullName evidence="1">Inosine triphosphate pyrophosphatase</fullName>
        <shortName evidence="1">ITPase</shortName>
        <shortName evidence="1">Inosine triphosphatase</shortName>
        <ecNumber evidence="1">3.6.1.66</ecNumber>
    </recommendedName>
    <alternativeName>
        <fullName evidence="1">Non-canonical purine NTP pyrophosphatase</fullName>
    </alternativeName>
    <alternativeName>
        <fullName evidence="1">Non-standard purine NTP pyrophosphatase</fullName>
    </alternativeName>
    <alternativeName>
        <fullName evidence="1">Nucleoside-triphosphate diphosphatase</fullName>
    </alternativeName>
    <alternativeName>
        <fullName evidence="1">Nucleoside-triphosphate pyrophosphatase</fullName>
        <shortName evidence="1">NTPase</shortName>
    </alternativeName>
    <alternativeName>
        <fullName evidence="1">XTP/dITP diphosphatase</fullName>
    </alternativeName>
</protein>
<comment type="function">
    <text evidence="1">Pyrophosphatase that hydrolyzes non-canonical purine nucleotides such as inosine triphosphate (ITP), deoxyinosine triphosphate (dITP) or xanthosine 5'-triphosphate (XTP) to their respective monophosphate derivatives. The enzyme does not distinguish between the deoxy- and ribose forms. Probably excludes non-canonical purines from RNA and DNA precursor pools, thus preventing their incorporation into RNA and DNA and avoiding chromosomal lesions.</text>
</comment>
<comment type="catalytic activity">
    <reaction evidence="1">
        <text>ITP + H2O = IMP + diphosphate + H(+)</text>
        <dbReference type="Rhea" id="RHEA:29399"/>
        <dbReference type="ChEBI" id="CHEBI:15377"/>
        <dbReference type="ChEBI" id="CHEBI:15378"/>
        <dbReference type="ChEBI" id="CHEBI:33019"/>
        <dbReference type="ChEBI" id="CHEBI:58053"/>
        <dbReference type="ChEBI" id="CHEBI:61402"/>
        <dbReference type="EC" id="3.6.1.66"/>
    </reaction>
    <physiologicalReaction direction="left-to-right" evidence="1">
        <dbReference type="Rhea" id="RHEA:29400"/>
    </physiologicalReaction>
</comment>
<comment type="catalytic activity">
    <reaction evidence="1">
        <text>dITP + H2O = dIMP + diphosphate + H(+)</text>
        <dbReference type="Rhea" id="RHEA:28342"/>
        <dbReference type="ChEBI" id="CHEBI:15377"/>
        <dbReference type="ChEBI" id="CHEBI:15378"/>
        <dbReference type="ChEBI" id="CHEBI:33019"/>
        <dbReference type="ChEBI" id="CHEBI:61194"/>
        <dbReference type="ChEBI" id="CHEBI:61382"/>
        <dbReference type="EC" id="3.6.1.66"/>
    </reaction>
    <physiologicalReaction direction="left-to-right" evidence="1">
        <dbReference type="Rhea" id="RHEA:28343"/>
    </physiologicalReaction>
</comment>
<comment type="catalytic activity">
    <reaction evidence="1">
        <text>XTP + H2O = XMP + diphosphate + H(+)</text>
        <dbReference type="Rhea" id="RHEA:28610"/>
        <dbReference type="ChEBI" id="CHEBI:15377"/>
        <dbReference type="ChEBI" id="CHEBI:15378"/>
        <dbReference type="ChEBI" id="CHEBI:33019"/>
        <dbReference type="ChEBI" id="CHEBI:57464"/>
        <dbReference type="ChEBI" id="CHEBI:61314"/>
        <dbReference type="EC" id="3.6.1.66"/>
    </reaction>
    <physiologicalReaction direction="left-to-right" evidence="1">
        <dbReference type="Rhea" id="RHEA:28611"/>
    </physiologicalReaction>
</comment>
<comment type="cofactor">
    <cofactor evidence="1">
        <name>Mg(2+)</name>
        <dbReference type="ChEBI" id="CHEBI:18420"/>
    </cofactor>
    <cofactor evidence="1">
        <name>Mn(2+)</name>
        <dbReference type="ChEBI" id="CHEBI:29035"/>
    </cofactor>
    <text evidence="1">Binds 1 divalent metal cation per subunit; can use either Mg(2+) or Mn(2+).</text>
</comment>
<comment type="subunit">
    <text evidence="1">Homodimer.</text>
</comment>
<comment type="subcellular location">
    <subcellularLocation>
        <location evidence="1">Cytoplasm</location>
    </subcellularLocation>
    <subcellularLocation>
        <location evidence="1">Nucleus</location>
    </subcellularLocation>
</comment>
<comment type="similarity">
    <text evidence="1">Belongs to the HAM1 NTPase family.</text>
</comment>
<dbReference type="EC" id="3.6.1.66" evidence="1"/>
<dbReference type="EMBL" id="AE017341">
    <property type="protein sequence ID" value="AAW40899.1"/>
    <property type="molecule type" value="Genomic_DNA"/>
</dbReference>
<dbReference type="RefSeq" id="XP_024511893.1">
    <property type="nucleotide sequence ID" value="XM_024656222.1"/>
</dbReference>
<dbReference type="RefSeq" id="XP_566718.1">
    <property type="nucleotide sequence ID" value="XM_566718.1"/>
</dbReference>
<dbReference type="SMR" id="Q5KPF3"/>
<dbReference type="FunCoup" id="Q5KPF3">
    <property type="interactions" value="539"/>
</dbReference>
<dbReference type="STRING" id="214684.Q5KPF3"/>
<dbReference type="PaxDb" id="214684-Q5KPF3"/>
<dbReference type="EnsemblFungi" id="AAW40899">
    <property type="protein sequence ID" value="AAW40899"/>
    <property type="gene ID" value="CNA03000"/>
</dbReference>
<dbReference type="GeneID" id="3253423"/>
<dbReference type="VEuPathDB" id="FungiDB:CNA03000"/>
<dbReference type="eggNOG" id="KOG3222">
    <property type="taxonomic scope" value="Eukaryota"/>
</dbReference>
<dbReference type="HOGENOM" id="CLU_082080_1_1_1"/>
<dbReference type="InParanoid" id="Q5KPF3"/>
<dbReference type="OMA" id="YDPIFQP"/>
<dbReference type="OrthoDB" id="6288734at2759"/>
<dbReference type="Proteomes" id="UP000002149">
    <property type="component" value="Chromosome 1"/>
</dbReference>
<dbReference type="GO" id="GO:0005737">
    <property type="term" value="C:cytoplasm"/>
    <property type="evidence" value="ECO:0000318"/>
    <property type="project" value="GO_Central"/>
</dbReference>
<dbReference type="GO" id="GO:0005634">
    <property type="term" value="C:nucleus"/>
    <property type="evidence" value="ECO:0007669"/>
    <property type="project" value="UniProtKB-SubCell"/>
</dbReference>
<dbReference type="GO" id="GO:0035870">
    <property type="term" value="F:dITP diphosphatase activity"/>
    <property type="evidence" value="ECO:0007669"/>
    <property type="project" value="RHEA"/>
</dbReference>
<dbReference type="GO" id="GO:0036220">
    <property type="term" value="F:ITP diphosphatase activity"/>
    <property type="evidence" value="ECO:0007669"/>
    <property type="project" value="RHEA"/>
</dbReference>
<dbReference type="GO" id="GO:0046872">
    <property type="term" value="F:metal ion binding"/>
    <property type="evidence" value="ECO:0007669"/>
    <property type="project" value="UniProtKB-KW"/>
</dbReference>
<dbReference type="GO" id="GO:0047429">
    <property type="term" value="F:nucleoside triphosphate diphosphatase activity"/>
    <property type="evidence" value="ECO:0000318"/>
    <property type="project" value="GO_Central"/>
</dbReference>
<dbReference type="GO" id="GO:0000166">
    <property type="term" value="F:nucleotide binding"/>
    <property type="evidence" value="ECO:0007669"/>
    <property type="project" value="UniProtKB-KW"/>
</dbReference>
<dbReference type="GO" id="GO:0036222">
    <property type="term" value="F:XTP diphosphatase activity"/>
    <property type="evidence" value="ECO:0007669"/>
    <property type="project" value="RHEA"/>
</dbReference>
<dbReference type="GO" id="GO:0009204">
    <property type="term" value="P:deoxyribonucleoside triphosphate catabolic process"/>
    <property type="evidence" value="ECO:0007669"/>
    <property type="project" value="UniProtKB-UniRule"/>
</dbReference>
<dbReference type="GO" id="GO:0009143">
    <property type="term" value="P:nucleoside triphosphate catabolic process"/>
    <property type="evidence" value="ECO:0000318"/>
    <property type="project" value="GO_Central"/>
</dbReference>
<dbReference type="GO" id="GO:0009117">
    <property type="term" value="P:nucleotide metabolic process"/>
    <property type="evidence" value="ECO:0007669"/>
    <property type="project" value="UniProtKB-KW"/>
</dbReference>
<dbReference type="CDD" id="cd00515">
    <property type="entry name" value="HAM1"/>
    <property type="match status" value="1"/>
</dbReference>
<dbReference type="FunFam" id="3.90.950.10:FF:000009">
    <property type="entry name" value="Inosine triphosphate pyrophosphatase"/>
    <property type="match status" value="1"/>
</dbReference>
<dbReference type="Gene3D" id="3.90.950.10">
    <property type="match status" value="1"/>
</dbReference>
<dbReference type="HAMAP" id="MF_03148">
    <property type="entry name" value="HAM1_NTPase"/>
    <property type="match status" value="1"/>
</dbReference>
<dbReference type="InterPro" id="IPR027502">
    <property type="entry name" value="ITPase"/>
</dbReference>
<dbReference type="InterPro" id="IPR029001">
    <property type="entry name" value="ITPase-like_fam"/>
</dbReference>
<dbReference type="InterPro" id="IPR002637">
    <property type="entry name" value="RdgB/HAM1"/>
</dbReference>
<dbReference type="NCBIfam" id="TIGR00042">
    <property type="entry name" value="RdgB/HAM1 family non-canonical purine NTP pyrophosphatase"/>
    <property type="match status" value="1"/>
</dbReference>
<dbReference type="PANTHER" id="PTHR11067:SF9">
    <property type="entry name" value="INOSINE TRIPHOSPHATE PYROPHOSPHATASE"/>
    <property type="match status" value="1"/>
</dbReference>
<dbReference type="PANTHER" id="PTHR11067">
    <property type="entry name" value="INOSINE TRIPHOSPHATE PYROPHOSPHATASE/HAM1 PROTEIN"/>
    <property type="match status" value="1"/>
</dbReference>
<dbReference type="Pfam" id="PF01725">
    <property type="entry name" value="Ham1p_like"/>
    <property type="match status" value="1"/>
</dbReference>
<dbReference type="SUPFAM" id="SSF52972">
    <property type="entry name" value="ITPase-like"/>
    <property type="match status" value="1"/>
</dbReference>
<reference key="1">
    <citation type="journal article" date="2005" name="Science">
        <title>The genome of the basidiomycetous yeast and human pathogen Cryptococcus neoformans.</title>
        <authorList>
            <person name="Loftus B.J."/>
            <person name="Fung E."/>
            <person name="Roncaglia P."/>
            <person name="Rowley D."/>
            <person name="Amedeo P."/>
            <person name="Bruno D."/>
            <person name="Vamathevan J."/>
            <person name="Miranda M."/>
            <person name="Anderson I.J."/>
            <person name="Fraser J.A."/>
            <person name="Allen J.E."/>
            <person name="Bosdet I.E."/>
            <person name="Brent M.R."/>
            <person name="Chiu R."/>
            <person name="Doering T.L."/>
            <person name="Donlin M.J."/>
            <person name="D'Souza C.A."/>
            <person name="Fox D.S."/>
            <person name="Grinberg V."/>
            <person name="Fu J."/>
            <person name="Fukushima M."/>
            <person name="Haas B.J."/>
            <person name="Huang J.C."/>
            <person name="Janbon G."/>
            <person name="Jones S.J.M."/>
            <person name="Koo H.L."/>
            <person name="Krzywinski M.I."/>
            <person name="Kwon-Chung K.J."/>
            <person name="Lengeler K.B."/>
            <person name="Maiti R."/>
            <person name="Marra M.A."/>
            <person name="Marra R.E."/>
            <person name="Mathewson C.A."/>
            <person name="Mitchell T.G."/>
            <person name="Pertea M."/>
            <person name="Riggs F.R."/>
            <person name="Salzberg S.L."/>
            <person name="Schein J.E."/>
            <person name="Shvartsbeyn A."/>
            <person name="Shin H."/>
            <person name="Shumway M."/>
            <person name="Specht C.A."/>
            <person name="Suh B.B."/>
            <person name="Tenney A."/>
            <person name="Utterback T.R."/>
            <person name="Wickes B.L."/>
            <person name="Wortman J.R."/>
            <person name="Wye N.H."/>
            <person name="Kronstad J.W."/>
            <person name="Lodge J.K."/>
            <person name="Heitman J."/>
            <person name="Davis R.W."/>
            <person name="Fraser C.M."/>
            <person name="Hyman R.W."/>
        </authorList>
    </citation>
    <scope>NUCLEOTIDE SEQUENCE [LARGE SCALE GENOMIC DNA]</scope>
    <source>
        <strain>JEC21 / ATCC MYA-565</strain>
    </source>
</reference>
<sequence length="189" mass="20315">MTSFVFVTGNANKLREVKAILAAGDSGIEVTSQSVDVPELQGTTQEIAIAKCKVAAEKLGTACVTEDTALCFEALNGLPGPYIKDFLANIGHEGLNTLLNGFPTTRATALCTFAYSPGPGEEPILFEGRTEGNIVPARGSKVFGWDPIFQPLEGGGRTYAEMDGEEKNKISHRYRALEKLRAYLSEQAK</sequence>
<proteinExistence type="inferred from homology"/>
<gene>
    <name type="ordered locus">CNA03000</name>
</gene>